<evidence type="ECO:0000250" key="1">
    <source>
        <dbReference type="UniProtKB" id="P20340"/>
    </source>
</evidence>
<evidence type="ECO:0000255" key="2"/>
<evidence type="ECO:0000256" key="3">
    <source>
        <dbReference type="SAM" id="MobiDB-lite"/>
    </source>
</evidence>
<evidence type="ECO:0000269" key="4">
    <source>
    </source>
</evidence>
<evidence type="ECO:0000303" key="5">
    <source ref="3"/>
</evidence>
<evidence type="ECO:0000305" key="6"/>
<evidence type="ECO:0000312" key="7">
    <source>
        <dbReference type="HGNC" id="HGNC:9775"/>
    </source>
</evidence>
<accession>O95755</accession>
<accession>Q2M390</accession>
<accession>Q7Z4A9</accession>
<accession>Q9UHP5</accession>
<feature type="chain" id="PRO_0000121248" description="Ras-related protein Rab-36">
    <location>
        <begin position="1"/>
        <end position="267"/>
    </location>
</feature>
<feature type="region of interest" description="Disordered" evidence="3">
    <location>
        <begin position="243"/>
        <end position="267"/>
    </location>
</feature>
<feature type="short sequence motif" description="Switch 1" evidence="1">
    <location>
        <begin position="76"/>
        <end position="94"/>
    </location>
</feature>
<feature type="short sequence motif" description="Switch 2" evidence="1">
    <location>
        <begin position="113"/>
        <end position="132"/>
    </location>
</feature>
<feature type="binding site" evidence="1">
    <location>
        <position position="68"/>
    </location>
    <ligand>
        <name>GTP</name>
        <dbReference type="ChEBI" id="CHEBI:37565"/>
    </ligand>
</feature>
<feature type="binding site" evidence="1">
    <location>
        <position position="69"/>
    </location>
    <ligand>
        <name>GTP</name>
        <dbReference type="ChEBI" id="CHEBI:37565"/>
    </ligand>
</feature>
<feature type="binding site" evidence="1">
    <location>
        <position position="70"/>
    </location>
    <ligand>
        <name>GTP</name>
        <dbReference type="ChEBI" id="CHEBI:37565"/>
    </ligand>
</feature>
<feature type="binding site" evidence="1">
    <location>
        <position position="71"/>
    </location>
    <ligand>
        <name>GTP</name>
        <dbReference type="ChEBI" id="CHEBI:37565"/>
    </ligand>
</feature>
<feature type="binding site" evidence="1">
    <location>
        <position position="71"/>
    </location>
    <ligand>
        <name>Mg(2+)</name>
        <dbReference type="ChEBI" id="CHEBI:18420"/>
    </ligand>
</feature>
<feature type="binding site" evidence="1">
    <location>
        <position position="72"/>
    </location>
    <ligand>
        <name>GTP</name>
        <dbReference type="ChEBI" id="CHEBI:37565"/>
    </ligand>
</feature>
<feature type="binding site" evidence="1">
    <location>
        <position position="83"/>
    </location>
    <ligand>
        <name>GTP</name>
        <dbReference type="ChEBI" id="CHEBI:37565"/>
    </ligand>
</feature>
<feature type="binding site" evidence="1">
    <location>
        <position position="86"/>
    </location>
    <ligand>
        <name>GTP</name>
        <dbReference type="ChEBI" id="CHEBI:37565"/>
    </ligand>
</feature>
<feature type="binding site" evidence="1">
    <location>
        <position position="89"/>
    </location>
    <ligand>
        <name>GTP</name>
        <dbReference type="ChEBI" id="CHEBI:37565"/>
    </ligand>
</feature>
<feature type="binding site" evidence="1">
    <location>
        <position position="89"/>
    </location>
    <ligand>
        <name>Mg(2+)</name>
        <dbReference type="ChEBI" id="CHEBI:18420"/>
    </ligand>
</feature>
<feature type="binding site" evidence="1">
    <location>
        <position position="112"/>
    </location>
    <ligand>
        <name>Mg(2+)</name>
        <dbReference type="ChEBI" id="CHEBI:18420"/>
    </ligand>
</feature>
<feature type="binding site" evidence="1">
    <location>
        <position position="115"/>
    </location>
    <ligand>
        <name>GTP</name>
        <dbReference type="ChEBI" id="CHEBI:37565"/>
    </ligand>
</feature>
<feature type="binding site" evidence="1">
    <location>
        <position position="172"/>
    </location>
    <ligand>
        <name>GTP</name>
        <dbReference type="ChEBI" id="CHEBI:37565"/>
    </ligand>
</feature>
<feature type="binding site" evidence="1">
    <location>
        <position position="174"/>
    </location>
    <ligand>
        <name>GTP</name>
        <dbReference type="ChEBI" id="CHEBI:37565"/>
    </ligand>
</feature>
<feature type="binding site" evidence="1">
    <location>
        <position position="203"/>
    </location>
    <ligand>
        <name>GTP</name>
        <dbReference type="ChEBI" id="CHEBI:37565"/>
    </ligand>
</feature>
<feature type="binding site" evidence="1">
    <location>
        <position position="204"/>
    </location>
    <ligand>
        <name>GTP</name>
        <dbReference type="ChEBI" id="CHEBI:37565"/>
    </ligand>
</feature>
<feature type="binding site" evidence="1">
    <location>
        <position position="205"/>
    </location>
    <ligand>
        <name>GTP</name>
        <dbReference type="ChEBI" id="CHEBI:37565"/>
    </ligand>
</feature>
<feature type="lipid moiety-binding region" description="S-geranylgeranyl cysteine" evidence="2">
    <location>
        <position position="266"/>
    </location>
</feature>
<feature type="lipid moiety-binding region" description="S-geranylgeranyl cysteine" evidence="2">
    <location>
        <position position="267"/>
    </location>
</feature>
<feature type="splice variant" id="VSP_010143" description="In isoform 2." evidence="5">
    <location>
        <begin position="55"/>
        <end position="76"/>
    </location>
</feature>
<feature type="sequence variant" id="VAR_024189" description="In dbSNP:rs5759612." evidence="4">
    <original>N</original>
    <variation>D</variation>
    <location>
        <position position="242"/>
    </location>
</feature>
<feature type="sequence variant" id="VAR_051715" description="In dbSNP:rs9624038.">
    <original>E</original>
    <variation>K</variation>
    <location>
        <position position="254"/>
    </location>
</feature>
<dbReference type="EC" id="3.6.5.2" evidence="1"/>
<dbReference type="EMBL" id="AB023061">
    <property type="protein sequence ID" value="BAA75195.1"/>
    <property type="status" value="ALT_INIT"/>
    <property type="molecule type" value="mRNA"/>
</dbReference>
<dbReference type="EMBL" id="AF133588">
    <property type="protein sequence ID" value="AAF02485.1"/>
    <property type="status" value="ALT_INIT"/>
    <property type="molecule type" value="mRNA"/>
</dbReference>
<dbReference type="EMBL" id="AY336745">
    <property type="protein sequence ID" value="AAQ16115.1"/>
    <property type="status" value="ALT_INIT"/>
    <property type="molecule type" value="mRNA"/>
</dbReference>
<dbReference type="EMBL" id="CR456553">
    <property type="protein sequence ID" value="CAG30439.1"/>
    <property type="status" value="ALT_INIT"/>
    <property type="molecule type" value="mRNA"/>
</dbReference>
<dbReference type="EMBL" id="BC104989">
    <property type="protein sequence ID" value="AAI04990.1"/>
    <property type="status" value="ALT_INIT"/>
    <property type="molecule type" value="mRNA"/>
</dbReference>
<dbReference type="EMBL" id="BC104991">
    <property type="protein sequence ID" value="AAI04992.1"/>
    <property type="status" value="ALT_INIT"/>
    <property type="molecule type" value="mRNA"/>
</dbReference>
<dbReference type="CCDS" id="CCDS13805.2">
    <molecule id="O95755-1"/>
</dbReference>
<dbReference type="RefSeq" id="NP_004905.2">
    <molecule id="O95755-1"/>
    <property type="nucleotide sequence ID" value="NM_004914.3"/>
</dbReference>
<dbReference type="SMR" id="O95755"/>
<dbReference type="BioGRID" id="114971">
    <property type="interactions" value="3"/>
</dbReference>
<dbReference type="FunCoup" id="O95755">
    <property type="interactions" value="586"/>
</dbReference>
<dbReference type="IntAct" id="O95755">
    <property type="interactions" value="1"/>
</dbReference>
<dbReference type="STRING" id="9606.ENSP00000263116"/>
<dbReference type="iPTMnet" id="O95755"/>
<dbReference type="PhosphoSitePlus" id="O95755"/>
<dbReference type="BioMuta" id="RAB36"/>
<dbReference type="REPRODUCTION-2DPAGE" id="O95755"/>
<dbReference type="jPOST" id="O95755"/>
<dbReference type="MassIVE" id="O95755"/>
<dbReference type="PaxDb" id="9606-ENSP00000263116"/>
<dbReference type="PeptideAtlas" id="O95755"/>
<dbReference type="ProteomicsDB" id="51025">
    <molecule id="O95755-1"/>
</dbReference>
<dbReference type="ProteomicsDB" id="51026">
    <molecule id="O95755-2"/>
</dbReference>
<dbReference type="Pumba" id="O95755"/>
<dbReference type="TopDownProteomics" id="O95755-1">
    <molecule id="O95755-1"/>
</dbReference>
<dbReference type="Antibodypedia" id="23692">
    <property type="antibodies" value="107 antibodies from 22 providers"/>
</dbReference>
<dbReference type="DNASU" id="9609"/>
<dbReference type="Ensembl" id="ENST00000263116.8">
    <molecule id="O95755-1"/>
    <property type="protein sequence ID" value="ENSP00000263116.3"/>
    <property type="gene ID" value="ENSG00000100228.14"/>
</dbReference>
<dbReference type="Ensembl" id="ENST00000341989.9">
    <molecule id="O95755-2"/>
    <property type="protein sequence ID" value="ENSP00000343494.5"/>
    <property type="gene ID" value="ENSG00000100228.14"/>
</dbReference>
<dbReference type="GeneID" id="9609"/>
<dbReference type="KEGG" id="hsa:9609"/>
<dbReference type="MANE-Select" id="ENST00000263116.8">
    <property type="protein sequence ID" value="ENSP00000263116.3"/>
    <property type="RefSeq nucleotide sequence ID" value="NM_004914.5"/>
    <property type="RefSeq protein sequence ID" value="NP_004905.3"/>
</dbReference>
<dbReference type="UCSC" id="uc002zwv.2">
    <molecule id="O95755-1"/>
    <property type="organism name" value="human"/>
</dbReference>
<dbReference type="AGR" id="HGNC:9775"/>
<dbReference type="CTD" id="9609"/>
<dbReference type="DisGeNET" id="9609"/>
<dbReference type="GeneCards" id="RAB36"/>
<dbReference type="HGNC" id="HGNC:9775">
    <property type="gene designation" value="RAB36"/>
</dbReference>
<dbReference type="HPA" id="ENSG00000100228">
    <property type="expression patterns" value="Tissue enhanced (fallopian)"/>
</dbReference>
<dbReference type="MIM" id="605662">
    <property type="type" value="gene"/>
</dbReference>
<dbReference type="neXtProt" id="NX_O95755"/>
<dbReference type="OpenTargets" id="ENSG00000100228"/>
<dbReference type="PharmGKB" id="PA34128"/>
<dbReference type="VEuPathDB" id="HostDB:ENSG00000100228"/>
<dbReference type="eggNOG" id="KOG0094">
    <property type="taxonomic scope" value="Eukaryota"/>
</dbReference>
<dbReference type="GeneTree" id="ENSGT00940000159687"/>
<dbReference type="HOGENOM" id="CLU_041217_22_1_1"/>
<dbReference type="InParanoid" id="O95755"/>
<dbReference type="OrthoDB" id="413584at2759"/>
<dbReference type="PAN-GO" id="O95755">
    <property type="GO annotations" value="1 GO annotation based on evolutionary models"/>
</dbReference>
<dbReference type="PhylomeDB" id="O95755"/>
<dbReference type="TreeFam" id="TF326626"/>
<dbReference type="PathwayCommons" id="O95755"/>
<dbReference type="Reactome" id="R-HSA-6811438">
    <property type="pathway name" value="Intra-Golgi traffic"/>
</dbReference>
<dbReference type="Reactome" id="R-HSA-8873719">
    <property type="pathway name" value="RAB geranylgeranylation"/>
</dbReference>
<dbReference type="SignaLink" id="O95755"/>
<dbReference type="BioGRID-ORCS" id="9609">
    <property type="hits" value="34 hits in 1151 CRISPR screens"/>
</dbReference>
<dbReference type="ChiTaRS" id="RAB36">
    <property type="organism name" value="human"/>
</dbReference>
<dbReference type="GeneWiki" id="RAB36"/>
<dbReference type="GenomeRNAi" id="9609"/>
<dbReference type="Pharos" id="O95755">
    <property type="development level" value="Tbio"/>
</dbReference>
<dbReference type="PRO" id="PR:O95755"/>
<dbReference type="Proteomes" id="UP000005640">
    <property type="component" value="Chromosome 22"/>
</dbReference>
<dbReference type="RNAct" id="O95755">
    <property type="molecule type" value="protein"/>
</dbReference>
<dbReference type="Bgee" id="ENSG00000100228">
    <property type="expression patterns" value="Expressed in right uterine tube and 136 other cell types or tissues"/>
</dbReference>
<dbReference type="ExpressionAtlas" id="O95755">
    <property type="expression patterns" value="baseline and differential"/>
</dbReference>
<dbReference type="GO" id="GO:0005794">
    <property type="term" value="C:Golgi apparatus"/>
    <property type="evidence" value="ECO:0000304"/>
    <property type="project" value="ProtInc"/>
</dbReference>
<dbReference type="GO" id="GO:0000139">
    <property type="term" value="C:Golgi membrane"/>
    <property type="evidence" value="ECO:0000304"/>
    <property type="project" value="Reactome"/>
</dbReference>
<dbReference type="GO" id="GO:0005525">
    <property type="term" value="F:GTP binding"/>
    <property type="evidence" value="ECO:0000318"/>
    <property type="project" value="GO_Central"/>
</dbReference>
<dbReference type="GO" id="GO:0003924">
    <property type="term" value="F:GTPase activity"/>
    <property type="evidence" value="ECO:0000318"/>
    <property type="project" value="GO_Central"/>
</dbReference>
<dbReference type="GO" id="GO:0015031">
    <property type="term" value="P:protein transport"/>
    <property type="evidence" value="ECO:0007669"/>
    <property type="project" value="UniProtKB-KW"/>
</dbReference>
<dbReference type="GO" id="GO:0016192">
    <property type="term" value="P:vesicle-mediated transport"/>
    <property type="evidence" value="ECO:0000318"/>
    <property type="project" value="GO_Central"/>
</dbReference>
<dbReference type="CDD" id="cd04108">
    <property type="entry name" value="Rab36_Rab34"/>
    <property type="match status" value="1"/>
</dbReference>
<dbReference type="FunFam" id="3.40.50.300:FF:000707">
    <property type="entry name" value="RAB36, member RAS oncogene family"/>
    <property type="match status" value="1"/>
</dbReference>
<dbReference type="Gene3D" id="3.40.50.300">
    <property type="entry name" value="P-loop containing nucleotide triphosphate hydrolases"/>
    <property type="match status" value="1"/>
</dbReference>
<dbReference type="InterPro" id="IPR027417">
    <property type="entry name" value="P-loop_NTPase"/>
</dbReference>
<dbReference type="InterPro" id="IPR050227">
    <property type="entry name" value="Rab"/>
</dbReference>
<dbReference type="InterPro" id="IPR005225">
    <property type="entry name" value="Small_GTP-bd"/>
</dbReference>
<dbReference type="InterPro" id="IPR001806">
    <property type="entry name" value="Small_GTPase"/>
</dbReference>
<dbReference type="NCBIfam" id="TIGR00231">
    <property type="entry name" value="small_GTP"/>
    <property type="match status" value="1"/>
</dbReference>
<dbReference type="PANTHER" id="PTHR47977">
    <property type="entry name" value="RAS-RELATED PROTEIN RAB"/>
    <property type="match status" value="1"/>
</dbReference>
<dbReference type="Pfam" id="PF00071">
    <property type="entry name" value="Ras"/>
    <property type="match status" value="1"/>
</dbReference>
<dbReference type="PRINTS" id="PR00449">
    <property type="entry name" value="RASTRNSFRMNG"/>
</dbReference>
<dbReference type="SMART" id="SM00177">
    <property type="entry name" value="ARF"/>
    <property type="match status" value="1"/>
</dbReference>
<dbReference type="SMART" id="SM00175">
    <property type="entry name" value="RAB"/>
    <property type="match status" value="1"/>
</dbReference>
<dbReference type="SMART" id="SM00176">
    <property type="entry name" value="RAN"/>
    <property type="match status" value="1"/>
</dbReference>
<dbReference type="SMART" id="SM00173">
    <property type="entry name" value="RAS"/>
    <property type="match status" value="1"/>
</dbReference>
<dbReference type="SMART" id="SM00174">
    <property type="entry name" value="RHO"/>
    <property type="match status" value="1"/>
</dbReference>
<dbReference type="SUPFAM" id="SSF52540">
    <property type="entry name" value="P-loop containing nucleoside triphosphate hydrolases"/>
    <property type="match status" value="1"/>
</dbReference>
<dbReference type="PROSITE" id="PS51419">
    <property type="entry name" value="RAB"/>
    <property type="match status" value="1"/>
</dbReference>
<organism>
    <name type="scientific">Homo sapiens</name>
    <name type="common">Human</name>
    <dbReference type="NCBI Taxonomy" id="9606"/>
    <lineage>
        <taxon>Eukaryota</taxon>
        <taxon>Metazoa</taxon>
        <taxon>Chordata</taxon>
        <taxon>Craniata</taxon>
        <taxon>Vertebrata</taxon>
        <taxon>Euteleostomi</taxon>
        <taxon>Mammalia</taxon>
        <taxon>Eutheria</taxon>
        <taxon>Euarchontoglires</taxon>
        <taxon>Primates</taxon>
        <taxon>Haplorrhini</taxon>
        <taxon>Catarrhini</taxon>
        <taxon>Hominidae</taxon>
        <taxon>Homo</taxon>
    </lineage>
</organism>
<name>RAB36_HUMAN</name>
<keyword id="KW-0025">Alternative splicing</keyword>
<keyword id="KW-0333">Golgi apparatus</keyword>
<keyword id="KW-0342">GTP-binding</keyword>
<keyword id="KW-0378">Hydrolase</keyword>
<keyword id="KW-0449">Lipoprotein</keyword>
<keyword id="KW-0460">Magnesium</keyword>
<keyword id="KW-0472">Membrane</keyword>
<keyword id="KW-0479">Metal-binding</keyword>
<keyword id="KW-0547">Nucleotide-binding</keyword>
<keyword id="KW-0636">Prenylation</keyword>
<keyword id="KW-0653">Protein transport</keyword>
<keyword id="KW-1267">Proteomics identification</keyword>
<keyword id="KW-1185">Reference proteome</keyword>
<keyword id="KW-0813">Transport</keyword>
<reference key="1">
    <citation type="journal article" date="1999" name="Biochem. Biophys. Res. Commun.">
        <title>Cloning and characterization of a novel Rab-family gene, Rab36, within the region at 22q11.2 that is homozygously deleted in malignant rhabdoid tumors.</title>
        <authorList>
            <person name="Mori T."/>
            <person name="Fukuda Y."/>
            <person name="Kuroda H."/>
            <person name="Matsumura T."/>
            <person name="Ota S."/>
            <person name="Sugimoto T."/>
            <person name="Nakamura Y."/>
            <person name="Inazawa J."/>
        </authorList>
    </citation>
    <scope>NUCLEOTIDE SEQUENCE [MRNA] (ISOFORM 1)</scope>
    <scope>VARIANT ASP-242</scope>
</reference>
<reference key="2">
    <citation type="journal article" date="2000" name="Gene">
        <title>Isolation of genes from the rhabdoid tumor deletion region in chromosome band 22q11.2.</title>
        <authorList>
            <person name="Zhou J.-Y."/>
            <person name="Fogelgren B."/>
            <person name="Wang Z."/>
            <person name="Roe B.A."/>
            <person name="Biegel J.A."/>
        </authorList>
    </citation>
    <scope>NUCLEOTIDE SEQUENCE [MRNA] (ISOFORM 1)</scope>
</reference>
<reference key="3">
    <citation type="submission" date="2003-07" db="EMBL/GenBank/DDBJ databases">
        <authorList>
            <person name="Shen C."/>
            <person name="Zhong G."/>
            <person name="Zheng G."/>
            <person name="Li H."/>
            <person name="Zhou G."/>
            <person name="Ke R."/>
            <person name="Yu R."/>
            <person name="Lin L."/>
            <person name="Yang S."/>
        </authorList>
    </citation>
    <scope>NUCLEOTIDE SEQUENCE [LARGE SCALE MRNA] (ISOFORM 2)</scope>
</reference>
<reference key="4">
    <citation type="journal article" date="2004" name="Genome Biol.">
        <title>A genome annotation-driven approach to cloning the human ORFeome.</title>
        <authorList>
            <person name="Collins J.E."/>
            <person name="Wright C.L."/>
            <person name="Edwards C.A."/>
            <person name="Davis M.P."/>
            <person name="Grinham J.A."/>
            <person name="Cole C.G."/>
            <person name="Goward M.E."/>
            <person name="Aguado B."/>
            <person name="Mallya M."/>
            <person name="Mokrab Y."/>
            <person name="Huckle E.J."/>
            <person name="Beare D.M."/>
            <person name="Dunham I."/>
        </authorList>
    </citation>
    <scope>NUCLEOTIDE SEQUENCE [LARGE SCALE MRNA] (ISOFORM 1)</scope>
</reference>
<reference key="5">
    <citation type="journal article" date="2004" name="Genome Res.">
        <title>The status, quality, and expansion of the NIH full-length cDNA project: the Mammalian Gene Collection (MGC).</title>
        <authorList>
            <consortium name="The MGC Project Team"/>
        </authorList>
    </citation>
    <scope>NUCLEOTIDE SEQUENCE [LARGE SCALE MRNA]</scope>
</reference>
<comment type="function">
    <text evidence="1">The small GTPases Rab are key regulators of intracellular membrane trafficking, from the formation of transport vesicles to their fusion with membranes. Rabs cycle between an inactive GDP-bound form and an active GTP-bound form that is able to recruit to membranes different sets of downstream effectors directly responsible for vesicle formation, movement, tethering and fusion.</text>
</comment>
<comment type="catalytic activity">
    <reaction evidence="1">
        <text>GTP + H2O = GDP + phosphate + H(+)</text>
        <dbReference type="Rhea" id="RHEA:19669"/>
        <dbReference type="ChEBI" id="CHEBI:15377"/>
        <dbReference type="ChEBI" id="CHEBI:15378"/>
        <dbReference type="ChEBI" id="CHEBI:37565"/>
        <dbReference type="ChEBI" id="CHEBI:43474"/>
        <dbReference type="ChEBI" id="CHEBI:58189"/>
        <dbReference type="EC" id="3.6.5.2"/>
    </reaction>
    <physiologicalReaction direction="left-to-right" evidence="1">
        <dbReference type="Rhea" id="RHEA:19670"/>
    </physiologicalReaction>
</comment>
<comment type="cofactor">
    <cofactor evidence="1">
        <name>Mg(2+)</name>
        <dbReference type="ChEBI" id="CHEBI:18420"/>
    </cofactor>
</comment>
<comment type="activity regulation">
    <text evidence="6">Regulated by guanine nucleotide exchange factors (GEFs) which promote the exchange of bound GDP for free GTP. Regulated by GTPase activating proteins (GAPs) which increase the GTP hydrolysis activity (Probable). Inhibited by GDP dissociation inhibitors (GDIs) (Probable).</text>
</comment>
<comment type="interaction">
    <interactant intactId="EBI-12404625">
        <id>O95755</id>
    </interactant>
    <interactant intactId="EBI-7116203">
        <id>O75031</id>
        <label>HSF2BP</label>
    </interactant>
    <organismsDiffer>false</organismsDiffer>
    <experiments>3</experiments>
</comment>
<comment type="subcellular location">
    <subcellularLocation>
        <location>Golgi apparatus membrane</location>
        <topology>Lipid-anchor</topology>
    </subcellularLocation>
</comment>
<comment type="alternative products">
    <event type="alternative splicing"/>
    <isoform>
        <id>O95755-1</id>
        <name>1</name>
        <sequence type="displayed"/>
    </isoform>
    <isoform>
        <id>O95755-2</id>
        <name>2</name>
        <sequence type="described" ref="VSP_010143"/>
    </isoform>
</comment>
<comment type="tissue specificity">
    <text>Ubiquitously present in all tissues examined.</text>
</comment>
<comment type="domain">
    <text evidence="1">Switch 1, switch 2 and the interswitch regions are characteristic of Rab GTPases and mediate the interactions with Rab downstream effectors. The switch regions undergo conformational changes upon nucleotide binding which drives interaction with specific sets of effector proteins, with most effectors only binding to GTP-bound Rab.</text>
</comment>
<comment type="similarity">
    <text evidence="6">Belongs to the small GTPase superfamily. Rab family.</text>
</comment>
<comment type="sequence caution" evidence="6">
    <conflict type="erroneous initiation">
        <sequence resource="EMBL-CDS" id="AAF02485"/>
    </conflict>
    <text>Extended N-terminus.</text>
</comment>
<comment type="sequence caution" evidence="6">
    <conflict type="erroneous initiation">
        <sequence resource="EMBL-CDS" id="AAI04990"/>
    </conflict>
    <text>Extended N-terminus.</text>
</comment>
<comment type="sequence caution" evidence="6">
    <conflict type="erroneous initiation">
        <sequence resource="EMBL-CDS" id="AAI04992"/>
    </conflict>
    <text>Extended N-terminus.</text>
</comment>
<comment type="sequence caution" evidence="6">
    <conflict type="erroneous initiation">
        <sequence resource="EMBL-CDS" id="AAQ16115"/>
    </conflict>
    <text>Extended N-terminus.</text>
</comment>
<comment type="sequence caution" evidence="6">
    <conflict type="erroneous initiation">
        <sequence resource="EMBL-CDS" id="BAA75195"/>
    </conflict>
    <text>Extended N-terminus.</text>
</comment>
<comment type="sequence caution" evidence="6">
    <conflict type="erroneous initiation">
        <sequence resource="EMBL-CDS" id="CAG30439"/>
    </conflict>
    <text>Extended N-terminus.</text>
</comment>
<gene>
    <name evidence="7" type="primary">RAB36</name>
</gene>
<proteinExistence type="evidence at protein level"/>
<sequence length="267" mass="29680">MRSSLTPLGPPVSRDRVIASFPKWYTPEACLQLREHFHGQVSAACQRRNTGTVGLKLSKVVVVGDLYVGKTSLIHRFCKNVFDRDYKATIGVDFEIERFEIAGIPYSLQIWDTAGQEKFKCIASAYYRGAQVIITAFDLTDVQTLEHTRQWLEDALRENEAGSCFIFLVGTKKDLLSGAACEQAEADAVHLAREMQAEYWSVSAKTGENVKAFFSRVAALAFEQSVLQDLERQSSARLQVGNGDLIQMEGSPPETQESKRPSSLGCC</sequence>
<protein>
    <recommendedName>
        <fullName>Ras-related protein Rab-36</fullName>
        <ecNumber evidence="1">3.6.5.2</ecNumber>
    </recommendedName>
</protein>